<reference key="1">
    <citation type="journal article" date="2000" name="Biochemistry">
        <title>Novel heme-containing lyase, phenylacetaldoxime dehydratase from Bacillus sp. strain OxB-1: purification, characterization, and molecular cloning of the gene.</title>
        <authorList>
            <person name="Kato Y."/>
            <person name="Nakamura K."/>
            <person name="Sakiyama H."/>
            <person name="Mayhew S.G."/>
            <person name="Asano Y."/>
        </authorList>
    </citation>
    <scope>NUCLEOTIDE SEQUENCE [GENOMIC DNA]</scope>
</reference>
<sequence>MQTILHTQQVEEQERFSYWRDAICDVFVKLDASQLSPHTFTGRMETGSLKDIQISEVNADSQRVVRSNRQIQKSVEDYFLVSLQTKGQAYIKQDQREARLQPGDFTLYDSTRPYVLHFEQPFQQIVFQFPRSLLLAAVRRQNKLPAILNPGTQHPVTTMVSTLLRTVASSYLHLDSITRLRVAETTLDLLATALTTISGVKLNEVNSMANVHRAGARAFISTHLADPDLTPDVVPSAKGFPPAISINYLKRKDNPSLL</sequence>
<proteinExistence type="predicted"/>
<accession>P82606</accession>
<feature type="chain" id="PRO_0000066328" description="Uncharacterized protein in nit 5'region">
    <location>
        <begin position="1"/>
        <end position="258"/>
    </location>
</feature>
<organism>
    <name type="scientific">Bacillus sp. (strain OxB-1)</name>
    <dbReference type="NCBI Taxonomy" id="98228"/>
    <lineage>
        <taxon>Bacteria</taxon>
        <taxon>Bacillati</taxon>
        <taxon>Bacillota</taxon>
        <taxon>Bacilli</taxon>
        <taxon>Bacillales</taxon>
        <taxon>Bacillaceae</taxon>
        <taxon>Bacillus</taxon>
    </lineage>
</organism>
<dbReference type="EMBL" id="AB028892">
    <property type="protein sequence ID" value="BAA90459.1"/>
    <property type="molecule type" value="Genomic_DNA"/>
</dbReference>
<dbReference type="SMR" id="P82606"/>
<dbReference type="STRING" id="98228.OXB_1095"/>
<dbReference type="InterPro" id="IPR035418">
    <property type="entry name" value="AraC-bd_2"/>
</dbReference>
<dbReference type="Pfam" id="PF14525">
    <property type="entry name" value="AraC_binding_2"/>
    <property type="match status" value="1"/>
</dbReference>
<protein>
    <recommendedName>
        <fullName>Uncharacterized protein in nit 5'region</fullName>
    </recommendedName>
    <alternativeName>
        <fullName>orf2</fullName>
    </alternativeName>
</protein>
<name>YNI2_BACSX</name>